<organism>
    <name type="scientific">Caulobacter vibrioides (strain ATCC 19089 / CIP 103742 / CB 15)</name>
    <name type="common">Caulobacter crescentus</name>
    <dbReference type="NCBI Taxonomy" id="190650"/>
    <lineage>
        <taxon>Bacteria</taxon>
        <taxon>Pseudomonadati</taxon>
        <taxon>Pseudomonadota</taxon>
        <taxon>Alphaproteobacteria</taxon>
        <taxon>Caulobacterales</taxon>
        <taxon>Caulobacteraceae</taxon>
        <taxon>Caulobacter</taxon>
    </lineage>
</organism>
<keyword id="KW-0963">Cytoplasm</keyword>
<keyword id="KW-0312">Gluconeogenesis</keyword>
<keyword id="KW-0324">Glycolysis</keyword>
<keyword id="KW-0413">Isomerase</keyword>
<keyword id="KW-1185">Reference proteome</keyword>
<name>TPIS_CAUVC</name>
<sequence>MTLSSTTPRPLIAGNWKMNGLSVALDEARAVAAALEAKPPAARVAIFPPATLLHRLSQAVEGAHLLTGGQDCHGKSSGAHTGDVSAEMVADAGGSLVICGHSERRTDHGETSAQVAGKAEAAAAAGLEPIVCVGETLETREAGQAVSFVVSQVRDSLPTSLAGKAFSVAYEPLWAIGTGRTASVDNIVEMHAAIRAELVSRFCEQGRTVLILYGGSVKPENAREILAAPEVGGALVGGASLKAKDFLAIIQAL</sequence>
<proteinExistence type="inferred from homology"/>
<gene>
    <name evidence="1" type="primary">tpiA</name>
    <name type="ordered locus">CC_1893</name>
</gene>
<dbReference type="EC" id="5.3.1.1" evidence="1"/>
<dbReference type="EMBL" id="AE005673">
    <property type="protein sequence ID" value="AAK23868.1"/>
    <property type="molecule type" value="Genomic_DNA"/>
</dbReference>
<dbReference type="PIR" id="H87483">
    <property type="entry name" value="H87483"/>
</dbReference>
<dbReference type="RefSeq" id="NP_420700.1">
    <property type="nucleotide sequence ID" value="NC_002696.2"/>
</dbReference>
<dbReference type="RefSeq" id="WP_010919759.1">
    <property type="nucleotide sequence ID" value="NC_002696.2"/>
</dbReference>
<dbReference type="SMR" id="Q9A733"/>
<dbReference type="STRING" id="190650.CC_1893"/>
<dbReference type="EnsemblBacteria" id="AAK23868">
    <property type="protein sequence ID" value="AAK23868"/>
    <property type="gene ID" value="CC_1893"/>
</dbReference>
<dbReference type="KEGG" id="ccr:CC_1893"/>
<dbReference type="PATRIC" id="fig|190650.5.peg.1909"/>
<dbReference type="eggNOG" id="COG0149">
    <property type="taxonomic scope" value="Bacteria"/>
</dbReference>
<dbReference type="HOGENOM" id="CLU_024251_2_1_5"/>
<dbReference type="BioCyc" id="CAULO:CC1893-MONOMER"/>
<dbReference type="UniPathway" id="UPA00109">
    <property type="reaction ID" value="UER00189"/>
</dbReference>
<dbReference type="UniPathway" id="UPA00138"/>
<dbReference type="Proteomes" id="UP000001816">
    <property type="component" value="Chromosome"/>
</dbReference>
<dbReference type="GO" id="GO:0005829">
    <property type="term" value="C:cytosol"/>
    <property type="evidence" value="ECO:0007669"/>
    <property type="project" value="TreeGrafter"/>
</dbReference>
<dbReference type="GO" id="GO:0004807">
    <property type="term" value="F:triose-phosphate isomerase activity"/>
    <property type="evidence" value="ECO:0007669"/>
    <property type="project" value="UniProtKB-UniRule"/>
</dbReference>
<dbReference type="GO" id="GO:0006094">
    <property type="term" value="P:gluconeogenesis"/>
    <property type="evidence" value="ECO:0007669"/>
    <property type="project" value="UniProtKB-UniRule"/>
</dbReference>
<dbReference type="GO" id="GO:0046166">
    <property type="term" value="P:glyceraldehyde-3-phosphate biosynthetic process"/>
    <property type="evidence" value="ECO:0007669"/>
    <property type="project" value="TreeGrafter"/>
</dbReference>
<dbReference type="GO" id="GO:0019563">
    <property type="term" value="P:glycerol catabolic process"/>
    <property type="evidence" value="ECO:0007669"/>
    <property type="project" value="TreeGrafter"/>
</dbReference>
<dbReference type="GO" id="GO:0006096">
    <property type="term" value="P:glycolytic process"/>
    <property type="evidence" value="ECO:0007669"/>
    <property type="project" value="UniProtKB-UniRule"/>
</dbReference>
<dbReference type="CDD" id="cd00311">
    <property type="entry name" value="TIM"/>
    <property type="match status" value="1"/>
</dbReference>
<dbReference type="FunFam" id="3.20.20.70:FF:000016">
    <property type="entry name" value="Triosephosphate isomerase"/>
    <property type="match status" value="1"/>
</dbReference>
<dbReference type="Gene3D" id="3.20.20.70">
    <property type="entry name" value="Aldolase class I"/>
    <property type="match status" value="1"/>
</dbReference>
<dbReference type="HAMAP" id="MF_00147_B">
    <property type="entry name" value="TIM_B"/>
    <property type="match status" value="1"/>
</dbReference>
<dbReference type="InterPro" id="IPR013785">
    <property type="entry name" value="Aldolase_TIM"/>
</dbReference>
<dbReference type="InterPro" id="IPR035990">
    <property type="entry name" value="TIM_sf"/>
</dbReference>
<dbReference type="InterPro" id="IPR022896">
    <property type="entry name" value="TrioseP_Isoase_bac/euk"/>
</dbReference>
<dbReference type="InterPro" id="IPR000652">
    <property type="entry name" value="Triosephosphate_isomerase"/>
</dbReference>
<dbReference type="InterPro" id="IPR020861">
    <property type="entry name" value="Triosephosphate_isomerase_AS"/>
</dbReference>
<dbReference type="NCBIfam" id="TIGR00419">
    <property type="entry name" value="tim"/>
    <property type="match status" value="1"/>
</dbReference>
<dbReference type="PANTHER" id="PTHR21139">
    <property type="entry name" value="TRIOSEPHOSPHATE ISOMERASE"/>
    <property type="match status" value="1"/>
</dbReference>
<dbReference type="PANTHER" id="PTHR21139:SF42">
    <property type="entry name" value="TRIOSEPHOSPHATE ISOMERASE"/>
    <property type="match status" value="1"/>
</dbReference>
<dbReference type="Pfam" id="PF00121">
    <property type="entry name" value="TIM"/>
    <property type="match status" value="1"/>
</dbReference>
<dbReference type="SUPFAM" id="SSF51351">
    <property type="entry name" value="Triosephosphate isomerase (TIM)"/>
    <property type="match status" value="1"/>
</dbReference>
<dbReference type="PROSITE" id="PS00171">
    <property type="entry name" value="TIM_1"/>
    <property type="match status" value="1"/>
</dbReference>
<dbReference type="PROSITE" id="PS51440">
    <property type="entry name" value="TIM_2"/>
    <property type="match status" value="1"/>
</dbReference>
<reference key="1">
    <citation type="journal article" date="2001" name="Proc. Natl. Acad. Sci. U.S.A.">
        <title>Complete genome sequence of Caulobacter crescentus.</title>
        <authorList>
            <person name="Nierman W.C."/>
            <person name="Feldblyum T.V."/>
            <person name="Laub M.T."/>
            <person name="Paulsen I.T."/>
            <person name="Nelson K.E."/>
            <person name="Eisen J.A."/>
            <person name="Heidelberg J.F."/>
            <person name="Alley M.R.K."/>
            <person name="Ohta N."/>
            <person name="Maddock J.R."/>
            <person name="Potocka I."/>
            <person name="Nelson W.C."/>
            <person name="Newton A."/>
            <person name="Stephens C."/>
            <person name="Phadke N.D."/>
            <person name="Ely B."/>
            <person name="DeBoy R.T."/>
            <person name="Dodson R.J."/>
            <person name="Durkin A.S."/>
            <person name="Gwinn M.L."/>
            <person name="Haft D.H."/>
            <person name="Kolonay J.F."/>
            <person name="Smit J."/>
            <person name="Craven M.B."/>
            <person name="Khouri H.M."/>
            <person name="Shetty J."/>
            <person name="Berry K.J."/>
            <person name="Utterback T.R."/>
            <person name="Tran K."/>
            <person name="Wolf A.M."/>
            <person name="Vamathevan J.J."/>
            <person name="Ermolaeva M.D."/>
            <person name="White O."/>
            <person name="Salzberg S.L."/>
            <person name="Venter J.C."/>
            <person name="Shapiro L."/>
            <person name="Fraser C.M."/>
        </authorList>
    </citation>
    <scope>NUCLEOTIDE SEQUENCE [LARGE SCALE GENOMIC DNA]</scope>
    <source>
        <strain>ATCC 19089 / CIP 103742 / CB 15</strain>
    </source>
</reference>
<evidence type="ECO:0000255" key="1">
    <source>
        <dbReference type="HAMAP-Rule" id="MF_00147"/>
    </source>
</evidence>
<protein>
    <recommendedName>
        <fullName evidence="1">Triosephosphate isomerase</fullName>
        <shortName evidence="1">TIM</shortName>
        <shortName evidence="1">TPI</shortName>
        <ecNumber evidence="1">5.3.1.1</ecNumber>
    </recommendedName>
    <alternativeName>
        <fullName evidence="1">Triose-phosphate isomerase</fullName>
    </alternativeName>
</protein>
<comment type="function">
    <text evidence="1">Involved in the gluconeogenesis. Catalyzes stereospecifically the conversion of dihydroxyacetone phosphate (DHAP) to D-glyceraldehyde-3-phosphate (G3P).</text>
</comment>
<comment type="catalytic activity">
    <reaction evidence="1">
        <text>D-glyceraldehyde 3-phosphate = dihydroxyacetone phosphate</text>
        <dbReference type="Rhea" id="RHEA:18585"/>
        <dbReference type="ChEBI" id="CHEBI:57642"/>
        <dbReference type="ChEBI" id="CHEBI:59776"/>
        <dbReference type="EC" id="5.3.1.1"/>
    </reaction>
</comment>
<comment type="pathway">
    <text evidence="1">Carbohydrate biosynthesis; gluconeogenesis.</text>
</comment>
<comment type="pathway">
    <text evidence="1">Carbohydrate degradation; glycolysis; D-glyceraldehyde 3-phosphate from glycerone phosphate: step 1/1.</text>
</comment>
<comment type="subunit">
    <text evidence="1">Homodimer.</text>
</comment>
<comment type="subcellular location">
    <subcellularLocation>
        <location evidence="1">Cytoplasm</location>
    </subcellularLocation>
</comment>
<comment type="similarity">
    <text evidence="1">Belongs to the triosephosphate isomerase family.</text>
</comment>
<accession>Q9A733</accession>
<feature type="chain" id="PRO_0000090201" description="Triosephosphate isomerase">
    <location>
        <begin position="1"/>
        <end position="253"/>
    </location>
</feature>
<feature type="active site" description="Electrophile" evidence="1">
    <location>
        <position position="101"/>
    </location>
</feature>
<feature type="active site" description="Proton acceptor" evidence="1">
    <location>
        <position position="171"/>
    </location>
</feature>
<feature type="binding site" evidence="1">
    <location>
        <begin position="15"/>
        <end position="17"/>
    </location>
    <ligand>
        <name>substrate</name>
    </ligand>
</feature>
<feature type="binding site" evidence="1">
    <location>
        <position position="177"/>
    </location>
    <ligand>
        <name>substrate</name>
    </ligand>
</feature>
<feature type="binding site" evidence="1">
    <location>
        <position position="216"/>
    </location>
    <ligand>
        <name>substrate</name>
    </ligand>
</feature>
<feature type="binding site" evidence="1">
    <location>
        <begin position="237"/>
        <end position="238"/>
    </location>
    <ligand>
        <name>substrate</name>
    </ligand>
</feature>